<evidence type="ECO:0000255" key="1">
    <source>
        <dbReference type="HAMAP-Rule" id="MF_01719"/>
    </source>
</evidence>
<reference key="1">
    <citation type="journal article" date="2005" name="Jpn. Agric. Res. Q.">
        <title>Genome sequence of Xanthomonas oryzae pv. oryzae suggests contribution of large numbers of effector genes and insertion sequences to its race diversity.</title>
        <authorList>
            <person name="Ochiai H."/>
            <person name="Inoue Y."/>
            <person name="Takeya M."/>
            <person name="Sasaki A."/>
            <person name="Kaku H."/>
        </authorList>
    </citation>
    <scope>NUCLEOTIDE SEQUENCE [LARGE SCALE GENOMIC DNA]</scope>
    <source>
        <strain>MAFF 311018</strain>
    </source>
</reference>
<name>METN_XANOM</name>
<feature type="chain" id="PRO_0000270444" description="Methionine import ATP-binding protein MetN">
    <location>
        <begin position="1"/>
        <end position="335"/>
    </location>
</feature>
<feature type="domain" description="ABC transporter" evidence="1">
    <location>
        <begin position="2"/>
        <end position="241"/>
    </location>
</feature>
<feature type="binding site" evidence="1">
    <location>
        <begin position="38"/>
        <end position="45"/>
    </location>
    <ligand>
        <name>ATP</name>
        <dbReference type="ChEBI" id="CHEBI:30616"/>
    </ligand>
</feature>
<keyword id="KW-0029">Amino-acid transport</keyword>
<keyword id="KW-0067">ATP-binding</keyword>
<keyword id="KW-0997">Cell inner membrane</keyword>
<keyword id="KW-1003">Cell membrane</keyword>
<keyword id="KW-0472">Membrane</keyword>
<keyword id="KW-0547">Nucleotide-binding</keyword>
<keyword id="KW-1278">Translocase</keyword>
<keyword id="KW-0813">Transport</keyword>
<sequence>MIEFQRLHKSYSVDGRQIVALHPLDLRIGPGEVFGIIGHSGAGKSTLIRLINRLEEPSGGRLLIGDEDVTALDSQGLRALRRRIGMIFQHFNLLSSRTVAGNVAFPLELVGTPRAEIDARVAELLARVGLQEQANQYPAQLSGGQKQRVGIARALATGPQILLCDEATSALDPQTTASVLQLLAQINRELGLTIVLITHEMDVIRRVCDRVAVLDAGKLVETGPVTEVFLHPKHVTTRRFVSEAEHLDEAELHRDFAAVGGRIVRLTFLGNGTYEPVLGRIARDTGVDYNILSGRVDRIKDTPYGQLIVALTGGDQTAARAGFVAAGVQVEDLRV</sequence>
<proteinExistence type="inferred from homology"/>
<protein>
    <recommendedName>
        <fullName evidence="1">Methionine import ATP-binding protein MetN</fullName>
        <ecNumber evidence="1">7.4.2.11</ecNumber>
    </recommendedName>
</protein>
<organism>
    <name type="scientific">Xanthomonas oryzae pv. oryzae (strain MAFF 311018)</name>
    <dbReference type="NCBI Taxonomy" id="342109"/>
    <lineage>
        <taxon>Bacteria</taxon>
        <taxon>Pseudomonadati</taxon>
        <taxon>Pseudomonadota</taxon>
        <taxon>Gammaproteobacteria</taxon>
        <taxon>Lysobacterales</taxon>
        <taxon>Lysobacteraceae</taxon>
        <taxon>Xanthomonas</taxon>
    </lineage>
</organism>
<accession>Q2P7S3</accession>
<gene>
    <name evidence="1" type="primary">metN</name>
    <name type="ordered locus">XOO0649</name>
</gene>
<dbReference type="EC" id="7.4.2.11" evidence="1"/>
<dbReference type="EMBL" id="AP008229">
    <property type="protein sequence ID" value="BAE67404.1"/>
    <property type="molecule type" value="Genomic_DNA"/>
</dbReference>
<dbReference type="RefSeq" id="WP_011407573.1">
    <property type="nucleotide sequence ID" value="NC_007705.1"/>
</dbReference>
<dbReference type="SMR" id="Q2P7S3"/>
<dbReference type="KEGG" id="xom:XOO0649"/>
<dbReference type="HOGENOM" id="CLU_000604_1_3_6"/>
<dbReference type="GO" id="GO:0005886">
    <property type="term" value="C:plasma membrane"/>
    <property type="evidence" value="ECO:0007669"/>
    <property type="project" value="UniProtKB-SubCell"/>
</dbReference>
<dbReference type="GO" id="GO:0033232">
    <property type="term" value="F:ABC-type D-methionine transporter activity"/>
    <property type="evidence" value="ECO:0007669"/>
    <property type="project" value="UniProtKB-EC"/>
</dbReference>
<dbReference type="GO" id="GO:0005524">
    <property type="term" value="F:ATP binding"/>
    <property type="evidence" value="ECO:0007669"/>
    <property type="project" value="UniProtKB-KW"/>
</dbReference>
<dbReference type="GO" id="GO:0016887">
    <property type="term" value="F:ATP hydrolysis activity"/>
    <property type="evidence" value="ECO:0007669"/>
    <property type="project" value="InterPro"/>
</dbReference>
<dbReference type="CDD" id="cd03258">
    <property type="entry name" value="ABC_MetN_methionine_transporter"/>
    <property type="match status" value="1"/>
</dbReference>
<dbReference type="FunFam" id="3.40.50.300:FF:000056">
    <property type="entry name" value="Cell division ATP-binding protein FtsE"/>
    <property type="match status" value="1"/>
</dbReference>
<dbReference type="Gene3D" id="3.30.70.260">
    <property type="match status" value="1"/>
</dbReference>
<dbReference type="Gene3D" id="3.40.50.300">
    <property type="entry name" value="P-loop containing nucleotide triphosphate hydrolases"/>
    <property type="match status" value="1"/>
</dbReference>
<dbReference type="InterPro" id="IPR003593">
    <property type="entry name" value="AAA+_ATPase"/>
</dbReference>
<dbReference type="InterPro" id="IPR003439">
    <property type="entry name" value="ABC_transporter-like_ATP-bd"/>
</dbReference>
<dbReference type="InterPro" id="IPR017871">
    <property type="entry name" value="ABC_transporter-like_CS"/>
</dbReference>
<dbReference type="InterPro" id="IPR045865">
    <property type="entry name" value="ACT-like_dom_sf"/>
</dbReference>
<dbReference type="InterPro" id="IPR041701">
    <property type="entry name" value="MetN_ABC"/>
</dbReference>
<dbReference type="InterPro" id="IPR050086">
    <property type="entry name" value="MetN_ABC_transporter-like"/>
</dbReference>
<dbReference type="InterPro" id="IPR018449">
    <property type="entry name" value="NIL_domain"/>
</dbReference>
<dbReference type="InterPro" id="IPR027417">
    <property type="entry name" value="P-loop_NTPase"/>
</dbReference>
<dbReference type="PANTHER" id="PTHR43166">
    <property type="entry name" value="AMINO ACID IMPORT ATP-BINDING PROTEIN"/>
    <property type="match status" value="1"/>
</dbReference>
<dbReference type="PANTHER" id="PTHR43166:SF30">
    <property type="entry name" value="METHIONINE IMPORT ATP-BINDING PROTEIN METN"/>
    <property type="match status" value="1"/>
</dbReference>
<dbReference type="Pfam" id="PF00005">
    <property type="entry name" value="ABC_tran"/>
    <property type="match status" value="1"/>
</dbReference>
<dbReference type="Pfam" id="PF09383">
    <property type="entry name" value="NIL"/>
    <property type="match status" value="1"/>
</dbReference>
<dbReference type="SMART" id="SM00382">
    <property type="entry name" value="AAA"/>
    <property type="match status" value="1"/>
</dbReference>
<dbReference type="SMART" id="SM00930">
    <property type="entry name" value="NIL"/>
    <property type="match status" value="1"/>
</dbReference>
<dbReference type="SUPFAM" id="SSF55021">
    <property type="entry name" value="ACT-like"/>
    <property type="match status" value="1"/>
</dbReference>
<dbReference type="SUPFAM" id="SSF52540">
    <property type="entry name" value="P-loop containing nucleoside triphosphate hydrolases"/>
    <property type="match status" value="1"/>
</dbReference>
<dbReference type="PROSITE" id="PS00211">
    <property type="entry name" value="ABC_TRANSPORTER_1"/>
    <property type="match status" value="1"/>
</dbReference>
<dbReference type="PROSITE" id="PS50893">
    <property type="entry name" value="ABC_TRANSPORTER_2"/>
    <property type="match status" value="1"/>
</dbReference>
<dbReference type="PROSITE" id="PS51264">
    <property type="entry name" value="METN"/>
    <property type="match status" value="1"/>
</dbReference>
<comment type="function">
    <text evidence="1">Part of the ABC transporter complex MetNIQ involved in methionine import. Responsible for energy coupling to the transport system.</text>
</comment>
<comment type="catalytic activity">
    <reaction evidence="1">
        <text>L-methionine(out) + ATP + H2O = L-methionine(in) + ADP + phosphate + H(+)</text>
        <dbReference type="Rhea" id="RHEA:29779"/>
        <dbReference type="ChEBI" id="CHEBI:15377"/>
        <dbReference type="ChEBI" id="CHEBI:15378"/>
        <dbReference type="ChEBI" id="CHEBI:30616"/>
        <dbReference type="ChEBI" id="CHEBI:43474"/>
        <dbReference type="ChEBI" id="CHEBI:57844"/>
        <dbReference type="ChEBI" id="CHEBI:456216"/>
        <dbReference type="EC" id="7.4.2.11"/>
    </reaction>
</comment>
<comment type="catalytic activity">
    <reaction evidence="1">
        <text>D-methionine(out) + ATP + H2O = D-methionine(in) + ADP + phosphate + H(+)</text>
        <dbReference type="Rhea" id="RHEA:29767"/>
        <dbReference type="ChEBI" id="CHEBI:15377"/>
        <dbReference type="ChEBI" id="CHEBI:15378"/>
        <dbReference type="ChEBI" id="CHEBI:30616"/>
        <dbReference type="ChEBI" id="CHEBI:43474"/>
        <dbReference type="ChEBI" id="CHEBI:57932"/>
        <dbReference type="ChEBI" id="CHEBI:456216"/>
        <dbReference type="EC" id="7.4.2.11"/>
    </reaction>
</comment>
<comment type="subunit">
    <text evidence="1">The complex is composed of two ATP-binding proteins (MetN), two transmembrane proteins (MetI) and a solute-binding protein (MetQ).</text>
</comment>
<comment type="subcellular location">
    <subcellularLocation>
        <location evidence="1">Cell inner membrane</location>
        <topology evidence="1">Peripheral membrane protein</topology>
    </subcellularLocation>
</comment>
<comment type="similarity">
    <text evidence="1">Belongs to the ABC transporter superfamily. Methionine importer (TC 3.A.1.24) family.</text>
</comment>